<proteinExistence type="inferred from homology"/>
<feature type="chain" id="PRO_1000098517" description="1-deoxy-D-xylulose 5-phosphate reductoisomerase">
    <location>
        <begin position="1"/>
        <end position="416"/>
    </location>
</feature>
<feature type="binding site" evidence="1">
    <location>
        <position position="10"/>
    </location>
    <ligand>
        <name>NADPH</name>
        <dbReference type="ChEBI" id="CHEBI:57783"/>
    </ligand>
</feature>
<feature type="binding site" evidence="1">
    <location>
        <position position="11"/>
    </location>
    <ligand>
        <name>NADPH</name>
        <dbReference type="ChEBI" id="CHEBI:57783"/>
    </ligand>
</feature>
<feature type="binding site" evidence="1">
    <location>
        <position position="12"/>
    </location>
    <ligand>
        <name>NADPH</name>
        <dbReference type="ChEBI" id="CHEBI:57783"/>
    </ligand>
</feature>
<feature type="binding site" evidence="1">
    <location>
        <position position="13"/>
    </location>
    <ligand>
        <name>NADPH</name>
        <dbReference type="ChEBI" id="CHEBI:57783"/>
    </ligand>
</feature>
<feature type="binding site" evidence="1">
    <location>
        <position position="36"/>
    </location>
    <ligand>
        <name>NADPH</name>
        <dbReference type="ChEBI" id="CHEBI:57783"/>
    </ligand>
</feature>
<feature type="binding site" evidence="1">
    <location>
        <position position="37"/>
    </location>
    <ligand>
        <name>NADPH</name>
        <dbReference type="ChEBI" id="CHEBI:57783"/>
    </ligand>
</feature>
<feature type="binding site" evidence="1">
    <location>
        <position position="38"/>
    </location>
    <ligand>
        <name>NADPH</name>
        <dbReference type="ChEBI" id="CHEBI:57783"/>
    </ligand>
</feature>
<feature type="binding site" evidence="1">
    <location>
        <position position="130"/>
    </location>
    <ligand>
        <name>NADPH</name>
        <dbReference type="ChEBI" id="CHEBI:57783"/>
    </ligand>
</feature>
<feature type="binding site" evidence="1">
    <location>
        <position position="131"/>
    </location>
    <ligand>
        <name>1-deoxy-D-xylulose 5-phosphate</name>
        <dbReference type="ChEBI" id="CHEBI:57792"/>
    </ligand>
</feature>
<feature type="binding site" evidence="1">
    <location>
        <position position="132"/>
    </location>
    <ligand>
        <name>NADPH</name>
        <dbReference type="ChEBI" id="CHEBI:57783"/>
    </ligand>
</feature>
<feature type="binding site" evidence="1">
    <location>
        <position position="156"/>
    </location>
    <ligand>
        <name>Mn(2+)</name>
        <dbReference type="ChEBI" id="CHEBI:29035"/>
    </ligand>
</feature>
<feature type="binding site" evidence="1">
    <location>
        <position position="157"/>
    </location>
    <ligand>
        <name>1-deoxy-D-xylulose 5-phosphate</name>
        <dbReference type="ChEBI" id="CHEBI:57792"/>
    </ligand>
</feature>
<feature type="binding site" evidence="1">
    <location>
        <position position="158"/>
    </location>
    <ligand>
        <name>1-deoxy-D-xylulose 5-phosphate</name>
        <dbReference type="ChEBI" id="CHEBI:57792"/>
    </ligand>
</feature>
<feature type="binding site" evidence="1">
    <location>
        <position position="158"/>
    </location>
    <ligand>
        <name>Mn(2+)</name>
        <dbReference type="ChEBI" id="CHEBI:29035"/>
    </ligand>
</feature>
<feature type="binding site" evidence="1">
    <location>
        <position position="194"/>
    </location>
    <ligand>
        <name>1-deoxy-D-xylulose 5-phosphate</name>
        <dbReference type="ChEBI" id="CHEBI:57792"/>
    </ligand>
</feature>
<feature type="binding site" evidence="1">
    <location>
        <position position="217"/>
    </location>
    <ligand>
        <name>1-deoxy-D-xylulose 5-phosphate</name>
        <dbReference type="ChEBI" id="CHEBI:57792"/>
    </ligand>
</feature>
<feature type="binding site" evidence="1">
    <location>
        <position position="223"/>
    </location>
    <ligand>
        <name>NADPH</name>
        <dbReference type="ChEBI" id="CHEBI:57783"/>
    </ligand>
</feature>
<feature type="binding site" evidence="1">
    <location>
        <position position="230"/>
    </location>
    <ligand>
        <name>1-deoxy-D-xylulose 5-phosphate</name>
        <dbReference type="ChEBI" id="CHEBI:57792"/>
    </ligand>
</feature>
<feature type="binding site" evidence="1">
    <location>
        <position position="235"/>
    </location>
    <ligand>
        <name>1-deoxy-D-xylulose 5-phosphate</name>
        <dbReference type="ChEBI" id="CHEBI:57792"/>
    </ligand>
</feature>
<feature type="binding site" evidence="1">
    <location>
        <position position="236"/>
    </location>
    <ligand>
        <name>1-deoxy-D-xylulose 5-phosphate</name>
        <dbReference type="ChEBI" id="CHEBI:57792"/>
    </ligand>
</feature>
<feature type="binding site" evidence="1">
    <location>
        <position position="239"/>
    </location>
    <ligand>
        <name>1-deoxy-D-xylulose 5-phosphate</name>
        <dbReference type="ChEBI" id="CHEBI:57792"/>
    </ligand>
</feature>
<feature type="binding site" evidence="1">
    <location>
        <position position="239"/>
    </location>
    <ligand>
        <name>Mn(2+)</name>
        <dbReference type="ChEBI" id="CHEBI:29035"/>
    </ligand>
</feature>
<accession>Q0IBN9</accession>
<protein>
    <recommendedName>
        <fullName evidence="1">1-deoxy-D-xylulose 5-phosphate reductoisomerase</fullName>
        <shortName evidence="1">DXP reductoisomerase</shortName>
        <ecNumber evidence="1">1.1.1.267</ecNumber>
    </recommendedName>
    <alternativeName>
        <fullName evidence="1">1-deoxyxylulose-5-phosphate reductoisomerase</fullName>
    </alternativeName>
    <alternativeName>
        <fullName evidence="1">2-C-methyl-D-erythritol 4-phosphate synthase</fullName>
    </alternativeName>
</protein>
<reference key="1">
    <citation type="journal article" date="2006" name="Proc. Natl. Acad. Sci. U.S.A.">
        <title>Genome sequence of Synechococcus CC9311: insights into adaptation to a coastal environment.</title>
        <authorList>
            <person name="Palenik B."/>
            <person name="Ren Q."/>
            <person name="Dupont C.L."/>
            <person name="Myers G.S."/>
            <person name="Heidelberg J.F."/>
            <person name="Badger J.H."/>
            <person name="Madupu R."/>
            <person name="Nelson W.C."/>
            <person name="Brinkac L.M."/>
            <person name="Dodson R.J."/>
            <person name="Durkin A.S."/>
            <person name="Daugherty S.C."/>
            <person name="Sullivan S.A."/>
            <person name="Khouri H."/>
            <person name="Mohamoud Y."/>
            <person name="Halpin R."/>
            <person name="Paulsen I.T."/>
        </authorList>
    </citation>
    <scope>NUCLEOTIDE SEQUENCE [LARGE SCALE GENOMIC DNA]</scope>
    <source>
        <strain>CC9311</strain>
    </source>
</reference>
<dbReference type="EC" id="1.1.1.267" evidence="1"/>
<dbReference type="EMBL" id="CP000435">
    <property type="protein sequence ID" value="ABI45229.1"/>
    <property type="molecule type" value="Genomic_DNA"/>
</dbReference>
<dbReference type="RefSeq" id="WP_011618856.1">
    <property type="nucleotide sequence ID" value="NC_008319.1"/>
</dbReference>
<dbReference type="SMR" id="Q0IBN9"/>
<dbReference type="STRING" id="64471.sync_0920"/>
<dbReference type="KEGG" id="syg:sync_0920"/>
<dbReference type="eggNOG" id="COG0743">
    <property type="taxonomic scope" value="Bacteria"/>
</dbReference>
<dbReference type="HOGENOM" id="CLU_035714_4_0_3"/>
<dbReference type="OrthoDB" id="9806546at2"/>
<dbReference type="UniPathway" id="UPA00056">
    <property type="reaction ID" value="UER00092"/>
</dbReference>
<dbReference type="Proteomes" id="UP000001961">
    <property type="component" value="Chromosome"/>
</dbReference>
<dbReference type="GO" id="GO:0030604">
    <property type="term" value="F:1-deoxy-D-xylulose-5-phosphate reductoisomerase activity"/>
    <property type="evidence" value="ECO:0007669"/>
    <property type="project" value="UniProtKB-UniRule"/>
</dbReference>
<dbReference type="GO" id="GO:0030145">
    <property type="term" value="F:manganese ion binding"/>
    <property type="evidence" value="ECO:0007669"/>
    <property type="project" value="TreeGrafter"/>
</dbReference>
<dbReference type="GO" id="GO:0070402">
    <property type="term" value="F:NADPH binding"/>
    <property type="evidence" value="ECO:0007669"/>
    <property type="project" value="InterPro"/>
</dbReference>
<dbReference type="GO" id="GO:0051484">
    <property type="term" value="P:isopentenyl diphosphate biosynthetic process, methylerythritol 4-phosphate pathway involved in terpenoid biosynthetic process"/>
    <property type="evidence" value="ECO:0007669"/>
    <property type="project" value="TreeGrafter"/>
</dbReference>
<dbReference type="FunFam" id="3.40.50.720:FF:000045">
    <property type="entry name" value="1-deoxy-D-xylulose 5-phosphate reductoisomerase"/>
    <property type="match status" value="1"/>
</dbReference>
<dbReference type="Gene3D" id="1.10.1740.10">
    <property type="match status" value="1"/>
</dbReference>
<dbReference type="Gene3D" id="3.40.50.720">
    <property type="entry name" value="NAD(P)-binding Rossmann-like Domain"/>
    <property type="match status" value="1"/>
</dbReference>
<dbReference type="HAMAP" id="MF_00183">
    <property type="entry name" value="DXP_reductoisom"/>
    <property type="match status" value="1"/>
</dbReference>
<dbReference type="InterPro" id="IPR003821">
    <property type="entry name" value="DXP_reductoisomerase"/>
</dbReference>
<dbReference type="InterPro" id="IPR013644">
    <property type="entry name" value="DXP_reductoisomerase_C"/>
</dbReference>
<dbReference type="InterPro" id="IPR013512">
    <property type="entry name" value="DXP_reductoisomerase_N"/>
</dbReference>
<dbReference type="InterPro" id="IPR026877">
    <property type="entry name" value="DXPR_C"/>
</dbReference>
<dbReference type="InterPro" id="IPR036169">
    <property type="entry name" value="DXPR_C_sf"/>
</dbReference>
<dbReference type="InterPro" id="IPR036291">
    <property type="entry name" value="NAD(P)-bd_dom_sf"/>
</dbReference>
<dbReference type="NCBIfam" id="TIGR00243">
    <property type="entry name" value="Dxr"/>
    <property type="match status" value="1"/>
</dbReference>
<dbReference type="NCBIfam" id="NF009114">
    <property type="entry name" value="PRK12464.1"/>
    <property type="match status" value="1"/>
</dbReference>
<dbReference type="PANTHER" id="PTHR30525">
    <property type="entry name" value="1-DEOXY-D-XYLULOSE 5-PHOSPHATE REDUCTOISOMERASE"/>
    <property type="match status" value="1"/>
</dbReference>
<dbReference type="PANTHER" id="PTHR30525:SF0">
    <property type="entry name" value="1-DEOXY-D-XYLULOSE 5-PHOSPHATE REDUCTOISOMERASE, CHLOROPLASTIC"/>
    <property type="match status" value="1"/>
</dbReference>
<dbReference type="Pfam" id="PF08436">
    <property type="entry name" value="DXP_redisom_C"/>
    <property type="match status" value="1"/>
</dbReference>
<dbReference type="Pfam" id="PF02670">
    <property type="entry name" value="DXP_reductoisom"/>
    <property type="match status" value="1"/>
</dbReference>
<dbReference type="Pfam" id="PF13288">
    <property type="entry name" value="DXPR_C"/>
    <property type="match status" value="1"/>
</dbReference>
<dbReference type="PIRSF" id="PIRSF006205">
    <property type="entry name" value="Dxp_reductismrs"/>
    <property type="match status" value="1"/>
</dbReference>
<dbReference type="SUPFAM" id="SSF69055">
    <property type="entry name" value="1-deoxy-D-xylulose-5-phosphate reductoisomerase, C-terminal domain"/>
    <property type="match status" value="1"/>
</dbReference>
<dbReference type="SUPFAM" id="SSF55347">
    <property type="entry name" value="Glyceraldehyde-3-phosphate dehydrogenase-like, C-terminal domain"/>
    <property type="match status" value="1"/>
</dbReference>
<dbReference type="SUPFAM" id="SSF51735">
    <property type="entry name" value="NAD(P)-binding Rossmann-fold domains"/>
    <property type="match status" value="1"/>
</dbReference>
<comment type="function">
    <text evidence="1">Catalyzes the NADPH-dependent rearrangement and reduction of 1-deoxy-D-xylulose-5-phosphate (DXP) to 2-C-methyl-D-erythritol 4-phosphate (MEP).</text>
</comment>
<comment type="catalytic activity">
    <reaction evidence="1">
        <text>2-C-methyl-D-erythritol 4-phosphate + NADP(+) = 1-deoxy-D-xylulose 5-phosphate + NADPH + H(+)</text>
        <dbReference type="Rhea" id="RHEA:13717"/>
        <dbReference type="ChEBI" id="CHEBI:15378"/>
        <dbReference type="ChEBI" id="CHEBI:57783"/>
        <dbReference type="ChEBI" id="CHEBI:57792"/>
        <dbReference type="ChEBI" id="CHEBI:58262"/>
        <dbReference type="ChEBI" id="CHEBI:58349"/>
        <dbReference type="EC" id="1.1.1.267"/>
    </reaction>
    <physiologicalReaction direction="right-to-left" evidence="1">
        <dbReference type="Rhea" id="RHEA:13719"/>
    </physiologicalReaction>
</comment>
<comment type="cofactor">
    <cofactor evidence="1">
        <name>Mg(2+)</name>
        <dbReference type="ChEBI" id="CHEBI:18420"/>
    </cofactor>
    <cofactor evidence="1">
        <name>Mn(2+)</name>
        <dbReference type="ChEBI" id="CHEBI:29035"/>
    </cofactor>
</comment>
<comment type="pathway">
    <text evidence="1">Isoprenoid biosynthesis; isopentenyl diphosphate biosynthesis via DXP pathway; isopentenyl diphosphate from 1-deoxy-D-xylulose 5-phosphate: step 1/6.</text>
</comment>
<comment type="similarity">
    <text evidence="1">Belongs to the DXR family.</text>
</comment>
<organism>
    <name type="scientific">Synechococcus sp. (strain CC9311)</name>
    <dbReference type="NCBI Taxonomy" id="64471"/>
    <lineage>
        <taxon>Bacteria</taxon>
        <taxon>Bacillati</taxon>
        <taxon>Cyanobacteriota</taxon>
        <taxon>Cyanophyceae</taxon>
        <taxon>Synechococcales</taxon>
        <taxon>Synechococcaceae</taxon>
        <taxon>Synechococcus</taxon>
    </lineage>
</organism>
<name>DXR_SYNS3</name>
<keyword id="KW-0414">Isoprene biosynthesis</keyword>
<keyword id="KW-0464">Manganese</keyword>
<keyword id="KW-0479">Metal-binding</keyword>
<keyword id="KW-0521">NADP</keyword>
<keyword id="KW-0560">Oxidoreductase</keyword>
<keyword id="KW-1185">Reference proteome</keyword>
<evidence type="ECO:0000255" key="1">
    <source>
        <dbReference type="HAMAP-Rule" id="MF_00183"/>
    </source>
</evidence>
<gene>
    <name evidence="1" type="primary">dxr</name>
    <name type="ordered locus">sync_0920</name>
</gene>
<sequence length="416" mass="44672">MKAISVLGSTGSIGTQTLAIVEDFPDQFRVVALSAGRNLSLLVSQIQRHRPDVVALADQALLAELKDRLMALPADTRPEPLPHLVGGPEGLDVVASWDSADLVVTGIVGCAGLLPTLAAIRAGKDLAVANKETLIAAGPVVLPELKKSGSRLLPADSEHSAIFQCLQGTPWSDTARLSTGVPTPGLRRIQLTASGGAFRDWSAADLEKATVADATSHPNWSMGKKITVDSASLMNKGLEVIEAHYLFGLDYDHIEIVIHPQSIIHSMVELADSSVLAQLGWPDMKLPILYCMSWPSRLETPWRRLDLTEVGQLSFRAPDPAKYPCMDLAYAAGRAGGTMPAVLNAANEEAVAQFLEEKIHFLDIPKMIEGACEQHKPDLAANPCLDDVLAVDQWARQAVREQVNRGTRLRGASMAA</sequence>